<gene>
    <name evidence="4" type="primary">calH</name>
    <name type="ORF">PENDEC_c013G02261</name>
</gene>
<sequence length="366" mass="41501">MATEKTPDWKIVDLQWAPDLGPVPVQDAMRPTRESQGEQEMIARMWVMCAIQMQDKLCAAKCTKQHFERYRSWLTAEYERFKQPGYPQVPDSRELVDMSNDARLAAMNKLREGVKNTYMWPVIEGPWRVYDNVVDIVEGRVKLVKVLLQDGLLEKFYDWANGLSEVRPLFNRMGRSNSSLRILEIGAGTGGTTARALEGLKSDDGELLYSSYEFTDISPLFFDAARRRFEGYSNIEYRALDISRNAVEQGFEAGAYDLVIASNVLHATPCLVDTLKNVRLLLKPNGFLFNQELSPPGKYVDFMVGLLPGWWLGDADGRAEGPCIPPEEWHRRLEQAGFEGLHAVGFDSDPPYYYNANMIARPAVNA</sequence>
<protein>
    <recommendedName>
        <fullName evidence="4">Methyltransferase calH</fullName>
        <ecNumber evidence="2">2.1.1.-</ecNumber>
    </recommendedName>
    <alternativeName>
        <fullName evidence="4">Calbistrin biosynthesis cluster protein H</fullName>
    </alternativeName>
</protein>
<name>CALH_PENDC</name>
<comment type="function">
    <text evidence="2 6">Methyltransferase; part of the gene cluster that mediates the biosynthesis of calbistrin A and related compounds. Calbistrin A is a secondary metabolite with an interesting structure that was recently found to have bioactivity against leukemia cells. It consists of two polyketides linked by an ester bond: a bicyclic decalin containing polyketide and a linear 12 carbon dioic acid structure (PubMed:30598828). The polyketide synthase calA is probably responsible for forming the decalin moiety. Because calA lacks a designated enoylreductase (ER) domain, the required activity is provided by the trans-enoyl reductase calK (PubMed:30598828). Following release from the PKS, calF then probably catalyzes the oxidation and the subsequent Diels Alder cycloisomerization that lead to the formation of the decalin moiety (Probable). The decalin polyketide backbone includes two C-methyl groups, at C7 and C11 in backbone, of which the C7 position is probably methylated by the methyltransferase domain of calA. A candidate for adding the methyl group at C11, if not done by CalA, is the cluster methyltransferase calH (Probable). Several additional tailoring enzymes within the cluster could be involved in the modification of the decalin polyketide product. Those include the 3 cytochrome P450 monooxygenases CalE, CalG and CalL, of which one might be responsible for the introduction of the extra hydroxyl group attached to the backbone of the decalin moiety, at position C9 in the backbone, that allows for attachment of the linear moiety (Probable). One tailoring enzyme activity that is expected to be involved in biosynthesis of calbistrin is an acyltransferase for connecting the two polyketide synthase products, and which could be performed by the cluster acyltransferase calJ (Probable). The enzyme responsible for the biosynthesis of the linear moiety, probably a second PKS, has not been identified yet (Probable).</text>
</comment>
<comment type="pathway">
    <text evidence="6">Secondary metabolite biosynthesis.</text>
</comment>
<comment type="induction">
    <text evidence="2">Expression is induced in complex medium (Czapek yeast autolysate medium) supporting calbistrin production.</text>
</comment>
<comment type="biotechnology">
    <text evidence="1 3">Calbistrin A has been reported to possess a number of interesting bioactivities including antifungal active against Candida albicans and cytotoxic toward both healthy and leukemic human cells.</text>
</comment>
<comment type="similarity">
    <text evidence="5">Belongs to the class I-like SAM-binding methyltransferase superfamily.</text>
</comment>
<dbReference type="EC" id="2.1.1.-" evidence="2"/>
<dbReference type="EMBL" id="MDYL01000013">
    <property type="protein sequence ID" value="OQD73938.1"/>
    <property type="molecule type" value="Genomic_DNA"/>
</dbReference>
<dbReference type="SMR" id="A0A1V6PAA5"/>
<dbReference type="STRING" id="69771.A0A1V6PAA5"/>
<dbReference type="OMA" id="FHEWAND"/>
<dbReference type="OrthoDB" id="4369512at2759"/>
<dbReference type="Proteomes" id="UP000191522">
    <property type="component" value="Unassembled WGS sequence"/>
</dbReference>
<dbReference type="GO" id="GO:0008168">
    <property type="term" value="F:methyltransferase activity"/>
    <property type="evidence" value="ECO:0007669"/>
    <property type="project" value="UniProtKB-KW"/>
</dbReference>
<dbReference type="GO" id="GO:0009058">
    <property type="term" value="P:biosynthetic process"/>
    <property type="evidence" value="ECO:0007669"/>
    <property type="project" value="UniProtKB-ARBA"/>
</dbReference>
<dbReference type="GO" id="GO:0032259">
    <property type="term" value="P:methylation"/>
    <property type="evidence" value="ECO:0007669"/>
    <property type="project" value="UniProtKB-KW"/>
</dbReference>
<dbReference type="CDD" id="cd02440">
    <property type="entry name" value="AdoMet_MTases"/>
    <property type="match status" value="1"/>
</dbReference>
<dbReference type="Gene3D" id="3.40.50.150">
    <property type="entry name" value="Vaccinia Virus protein VP39"/>
    <property type="match status" value="1"/>
</dbReference>
<dbReference type="InterPro" id="IPR013217">
    <property type="entry name" value="Methyltransf_12"/>
</dbReference>
<dbReference type="InterPro" id="IPR050444">
    <property type="entry name" value="Polyketide_Synthase"/>
</dbReference>
<dbReference type="InterPro" id="IPR029063">
    <property type="entry name" value="SAM-dependent_MTases_sf"/>
</dbReference>
<dbReference type="PANTHER" id="PTHR45681:SF6">
    <property type="entry name" value="POLYKETIDE SYNTHASE 37"/>
    <property type="match status" value="1"/>
</dbReference>
<dbReference type="PANTHER" id="PTHR45681">
    <property type="entry name" value="POLYKETIDE SYNTHASE 44-RELATED"/>
    <property type="match status" value="1"/>
</dbReference>
<dbReference type="Pfam" id="PF08242">
    <property type="entry name" value="Methyltransf_12"/>
    <property type="match status" value="1"/>
</dbReference>
<dbReference type="SUPFAM" id="SSF53335">
    <property type="entry name" value="S-adenosyl-L-methionine-dependent methyltransferases"/>
    <property type="match status" value="1"/>
</dbReference>
<proteinExistence type="evidence at protein level"/>
<keyword id="KW-0489">Methyltransferase</keyword>
<keyword id="KW-1185">Reference proteome</keyword>
<keyword id="KW-0949">S-adenosyl-L-methionine</keyword>
<keyword id="KW-0808">Transferase</keyword>
<feature type="chain" id="PRO_0000446483" description="Methyltransferase calH">
    <location>
        <begin position="1"/>
        <end position="366"/>
    </location>
</feature>
<feature type="binding site">
    <location>
        <position position="189"/>
    </location>
    <ligand>
        <name>S-adenosyl-L-methionine</name>
        <dbReference type="ChEBI" id="CHEBI:59789"/>
    </ligand>
</feature>
<feature type="binding site">
    <location>
        <position position="216"/>
    </location>
    <ligand>
        <name>S-adenosyl-L-methionine</name>
        <dbReference type="ChEBI" id="CHEBI:59789"/>
    </ligand>
</feature>
<feature type="binding site">
    <location>
        <begin position="245"/>
        <end position="246"/>
    </location>
    <ligand>
        <name>S-adenosyl-L-methionine</name>
        <dbReference type="ChEBI" id="CHEBI:59789"/>
    </ligand>
</feature>
<evidence type="ECO:0000269" key="1">
    <source>
    </source>
</evidence>
<evidence type="ECO:0000269" key="2">
    <source>
    </source>
</evidence>
<evidence type="ECO:0000269" key="3">
    <source>
    </source>
</evidence>
<evidence type="ECO:0000303" key="4">
    <source>
    </source>
</evidence>
<evidence type="ECO:0000305" key="5"/>
<evidence type="ECO:0000305" key="6">
    <source>
    </source>
</evidence>
<reference key="1">
    <citation type="journal article" date="2017" name="Nat. Microbiol.">
        <title>Global analysis of biosynthetic gene clusters reveals vast potential of secondary metabolite production in Penicillium species.</title>
        <authorList>
            <person name="Nielsen J.C."/>
            <person name="Grijseels S."/>
            <person name="Prigent S."/>
            <person name="Ji B."/>
            <person name="Dainat J."/>
            <person name="Nielsen K.F."/>
            <person name="Frisvad J.C."/>
            <person name="Workman M."/>
            <person name="Nielsen J."/>
        </authorList>
    </citation>
    <scope>NUCLEOTIDE SEQUENCE [LARGE SCALE GENOMIC DNA]</scope>
    <source>
        <strain>IBT 11843</strain>
    </source>
</reference>
<reference key="2">
    <citation type="journal article" date="1993" name="J. Antibiot.">
        <title>Calbistrins, novel antifungal agents produced by Penicillium restrictum. I. Production, taxonomy of the producing organism and biological activity.</title>
        <authorList>
            <person name="Jackson M."/>
            <person name="Karwowski J.P."/>
            <person name="Humphrey P.E."/>
            <person name="Kohl W.L."/>
            <person name="Barlow G.J."/>
            <person name="Tanaka S.K."/>
        </authorList>
    </citation>
    <scope>BIOTECHNOLOGY</scope>
</reference>
<reference key="3">
    <citation type="journal article" date="2013" name="Molecules">
        <title>Bio-activity and dereplication-based discovery of ophiobolins and other fungal secondary metabolites targeting leukemia cells.</title>
        <authorList>
            <person name="Bladt T.T."/>
            <person name="Duerr C."/>
            <person name="Knudsen P.B."/>
            <person name="Kildgaard S."/>
            <person name="Frisvad J.C."/>
            <person name="Gotfredsen C.H."/>
            <person name="Seiffert M."/>
            <person name="Larsen T.O."/>
        </authorList>
    </citation>
    <scope>BIOTECHNOLOGY</scope>
</reference>
<reference key="4">
    <citation type="journal article" date="2018" name="Fungal Biol. Biotechnol.">
        <title>Identification of the decumbenone biosynthetic gene cluster in Penicillium decumbens and the importance for production of calbistrin.</title>
        <authorList>
            <person name="Grijseels S."/>
            <person name="Pohl C."/>
            <person name="Nielsen J.C."/>
            <person name="Wasil Z."/>
            <person name="Nygaard Y."/>
            <person name="Nielsen J."/>
            <person name="Frisvad J.C."/>
            <person name="Nielsen K.F."/>
            <person name="Workman M."/>
            <person name="Larsen T.O."/>
            <person name="Driessen A.J.M."/>
            <person name="Frandsen R.J.N."/>
        </authorList>
    </citation>
    <scope>IDENTIFICATION</scope>
    <scope>FUNCTION</scope>
    <scope>INDUCTION</scope>
    <scope>PATHWAY</scope>
</reference>
<organism>
    <name type="scientific">Penicillium decumbens</name>
    <dbReference type="NCBI Taxonomy" id="69771"/>
    <lineage>
        <taxon>Eukaryota</taxon>
        <taxon>Fungi</taxon>
        <taxon>Dikarya</taxon>
        <taxon>Ascomycota</taxon>
        <taxon>Pezizomycotina</taxon>
        <taxon>Eurotiomycetes</taxon>
        <taxon>Eurotiomycetidae</taxon>
        <taxon>Eurotiales</taxon>
        <taxon>Aspergillaceae</taxon>
        <taxon>Penicillium</taxon>
    </lineage>
</organism>
<accession>A0A1V6PAA5</accession>